<proteinExistence type="inferred from homology"/>
<sequence length="367" mass="38120">MKVLAAMSGGVDSSVAAARMVDAGHEVVGVHMALSTAPGTLRTGSRGCCSKEDAADARRVADVLGIPFYVWDFAEKFKEDVINDFVSSYARGETPNPCVRCNQQIKFAALSARAVALGFDTVATGHYARLSGGRLRRAVDRDKDQSYVLAVLTAQQLRHAAFPIGDTPKRQIRAEAARRGLAVANKPDSHDICFIPSGNTKAFLGERIGVRRGVVVDADGVVLASHDGVHGFTIGQRRGLGIAGPGPNGRPRYVTAIDADTATVHVGDVTDLDVQTLTGRAPVFTAGAAPSGPVDCVVQVRAHGETVSAVAELIGDALFVQLHAPLRGVARGQTLVLYRPDPAGDEVLGSATIAGASGLSTGGNPGA</sequence>
<name>MNMA_MYCBT</name>
<organism>
    <name type="scientific">Mycobacterium bovis (strain BCG / Tokyo 172 / ATCC 35737 / TMC 1019)</name>
    <dbReference type="NCBI Taxonomy" id="561275"/>
    <lineage>
        <taxon>Bacteria</taxon>
        <taxon>Bacillati</taxon>
        <taxon>Actinomycetota</taxon>
        <taxon>Actinomycetes</taxon>
        <taxon>Mycobacteriales</taxon>
        <taxon>Mycobacteriaceae</taxon>
        <taxon>Mycobacterium</taxon>
        <taxon>Mycobacterium tuberculosis complex</taxon>
    </lineage>
</organism>
<evidence type="ECO:0000255" key="1">
    <source>
        <dbReference type="HAMAP-Rule" id="MF_00144"/>
    </source>
</evidence>
<comment type="function">
    <text evidence="1">Catalyzes the 2-thiolation of uridine at the wobble position (U34) of tRNA, leading to the formation of s(2)U34.</text>
</comment>
<comment type="catalytic activity">
    <reaction evidence="1">
        <text>S-sulfanyl-L-cysteinyl-[protein] + uridine(34) in tRNA + AH2 + ATP = 2-thiouridine(34) in tRNA + L-cysteinyl-[protein] + A + AMP + diphosphate + H(+)</text>
        <dbReference type="Rhea" id="RHEA:47032"/>
        <dbReference type="Rhea" id="RHEA-COMP:10131"/>
        <dbReference type="Rhea" id="RHEA-COMP:11726"/>
        <dbReference type="Rhea" id="RHEA-COMP:11727"/>
        <dbReference type="Rhea" id="RHEA-COMP:11728"/>
        <dbReference type="ChEBI" id="CHEBI:13193"/>
        <dbReference type="ChEBI" id="CHEBI:15378"/>
        <dbReference type="ChEBI" id="CHEBI:17499"/>
        <dbReference type="ChEBI" id="CHEBI:29950"/>
        <dbReference type="ChEBI" id="CHEBI:30616"/>
        <dbReference type="ChEBI" id="CHEBI:33019"/>
        <dbReference type="ChEBI" id="CHEBI:61963"/>
        <dbReference type="ChEBI" id="CHEBI:65315"/>
        <dbReference type="ChEBI" id="CHEBI:87170"/>
        <dbReference type="ChEBI" id="CHEBI:456215"/>
        <dbReference type="EC" id="2.8.1.13"/>
    </reaction>
</comment>
<comment type="subcellular location">
    <subcellularLocation>
        <location evidence="1">Cytoplasm</location>
    </subcellularLocation>
</comment>
<comment type="similarity">
    <text evidence="1">Belongs to the MnmA/TRMU family.</text>
</comment>
<keyword id="KW-0067">ATP-binding</keyword>
<keyword id="KW-0963">Cytoplasm</keyword>
<keyword id="KW-1015">Disulfide bond</keyword>
<keyword id="KW-0547">Nucleotide-binding</keyword>
<keyword id="KW-0694">RNA-binding</keyword>
<keyword id="KW-0808">Transferase</keyword>
<keyword id="KW-0819">tRNA processing</keyword>
<keyword id="KW-0820">tRNA-binding</keyword>
<dbReference type="EC" id="2.8.1.13" evidence="1"/>
<dbReference type="EMBL" id="AP010918">
    <property type="protein sequence ID" value="BAH27320.1"/>
    <property type="molecule type" value="Genomic_DNA"/>
</dbReference>
<dbReference type="RefSeq" id="WP_003415909.1">
    <property type="nucleotide sequence ID" value="NZ_CP014566.1"/>
</dbReference>
<dbReference type="SMR" id="C1AGE1"/>
<dbReference type="KEGG" id="mbt:JTY_3042"/>
<dbReference type="HOGENOM" id="CLU_035188_0_2_11"/>
<dbReference type="GO" id="GO:0005737">
    <property type="term" value="C:cytoplasm"/>
    <property type="evidence" value="ECO:0007669"/>
    <property type="project" value="UniProtKB-SubCell"/>
</dbReference>
<dbReference type="GO" id="GO:0005524">
    <property type="term" value="F:ATP binding"/>
    <property type="evidence" value="ECO:0007669"/>
    <property type="project" value="UniProtKB-KW"/>
</dbReference>
<dbReference type="GO" id="GO:0000049">
    <property type="term" value="F:tRNA binding"/>
    <property type="evidence" value="ECO:0007669"/>
    <property type="project" value="UniProtKB-KW"/>
</dbReference>
<dbReference type="GO" id="GO:0103016">
    <property type="term" value="F:tRNA-uridine 2-sulfurtransferase activity"/>
    <property type="evidence" value="ECO:0007669"/>
    <property type="project" value="UniProtKB-EC"/>
</dbReference>
<dbReference type="GO" id="GO:0002143">
    <property type="term" value="P:tRNA wobble position uridine thiolation"/>
    <property type="evidence" value="ECO:0007669"/>
    <property type="project" value="TreeGrafter"/>
</dbReference>
<dbReference type="CDD" id="cd01998">
    <property type="entry name" value="MnmA_TRMU-like"/>
    <property type="match status" value="1"/>
</dbReference>
<dbReference type="FunFam" id="3.40.50.620:FF:000057">
    <property type="entry name" value="tRNA-specific 2-thiouridylase MnmA"/>
    <property type="match status" value="1"/>
</dbReference>
<dbReference type="Gene3D" id="2.30.30.280">
    <property type="entry name" value="Adenine nucleotide alpha hydrolases-like domains"/>
    <property type="match status" value="1"/>
</dbReference>
<dbReference type="Gene3D" id="3.40.50.620">
    <property type="entry name" value="HUPs"/>
    <property type="match status" value="1"/>
</dbReference>
<dbReference type="Gene3D" id="2.40.30.10">
    <property type="entry name" value="Translation factors"/>
    <property type="match status" value="1"/>
</dbReference>
<dbReference type="HAMAP" id="MF_00144">
    <property type="entry name" value="tRNA_thiouridyl_MnmA"/>
    <property type="match status" value="1"/>
</dbReference>
<dbReference type="InterPro" id="IPR004506">
    <property type="entry name" value="MnmA-like"/>
</dbReference>
<dbReference type="InterPro" id="IPR046885">
    <property type="entry name" value="MnmA-like_C"/>
</dbReference>
<dbReference type="InterPro" id="IPR046884">
    <property type="entry name" value="MnmA-like_central"/>
</dbReference>
<dbReference type="InterPro" id="IPR023382">
    <property type="entry name" value="MnmA-like_central_sf"/>
</dbReference>
<dbReference type="InterPro" id="IPR014729">
    <property type="entry name" value="Rossmann-like_a/b/a_fold"/>
</dbReference>
<dbReference type="NCBIfam" id="NF001138">
    <property type="entry name" value="PRK00143.1"/>
    <property type="match status" value="1"/>
</dbReference>
<dbReference type="NCBIfam" id="TIGR00420">
    <property type="entry name" value="trmU"/>
    <property type="match status" value="1"/>
</dbReference>
<dbReference type="PANTHER" id="PTHR11933:SF5">
    <property type="entry name" value="MITOCHONDRIAL TRNA-SPECIFIC 2-THIOURIDYLASE 1"/>
    <property type="match status" value="1"/>
</dbReference>
<dbReference type="PANTHER" id="PTHR11933">
    <property type="entry name" value="TRNA 5-METHYLAMINOMETHYL-2-THIOURIDYLATE -METHYLTRANSFERASE"/>
    <property type="match status" value="1"/>
</dbReference>
<dbReference type="Pfam" id="PF03054">
    <property type="entry name" value="tRNA_Me_trans"/>
    <property type="match status" value="1"/>
</dbReference>
<dbReference type="Pfam" id="PF20258">
    <property type="entry name" value="tRNA_Me_trans_C"/>
    <property type="match status" value="1"/>
</dbReference>
<dbReference type="Pfam" id="PF20259">
    <property type="entry name" value="tRNA_Me_trans_M"/>
    <property type="match status" value="1"/>
</dbReference>
<dbReference type="SUPFAM" id="SSF52402">
    <property type="entry name" value="Adenine nucleotide alpha hydrolases-like"/>
    <property type="match status" value="1"/>
</dbReference>
<feature type="chain" id="PRO_1000198616" description="tRNA-specific 2-thiouridylase MnmA">
    <location>
        <begin position="1"/>
        <end position="367"/>
    </location>
</feature>
<feature type="region of interest" description="Interaction with tRNA" evidence="1">
    <location>
        <begin position="143"/>
        <end position="145"/>
    </location>
</feature>
<feature type="active site" description="Nucleophile" evidence="1">
    <location>
        <position position="101"/>
    </location>
</feature>
<feature type="active site" description="Cysteine persulfide intermediate" evidence="1">
    <location>
        <position position="193"/>
    </location>
</feature>
<feature type="binding site" evidence="1">
    <location>
        <begin position="6"/>
        <end position="13"/>
    </location>
    <ligand>
        <name>ATP</name>
        <dbReference type="ChEBI" id="CHEBI:30616"/>
    </ligand>
</feature>
<feature type="binding site" evidence="1">
    <location>
        <position position="32"/>
    </location>
    <ligand>
        <name>ATP</name>
        <dbReference type="ChEBI" id="CHEBI:30616"/>
    </ligand>
</feature>
<feature type="binding site" evidence="1">
    <location>
        <position position="125"/>
    </location>
    <ligand>
        <name>ATP</name>
        <dbReference type="ChEBI" id="CHEBI:30616"/>
    </ligand>
</feature>
<feature type="site" description="Interaction with tRNA" evidence="1">
    <location>
        <position position="126"/>
    </location>
</feature>
<feature type="site" description="Interaction with tRNA" evidence="1">
    <location>
        <position position="333"/>
    </location>
</feature>
<feature type="disulfide bond" description="Alternate" evidence="1">
    <location>
        <begin position="101"/>
        <end position="193"/>
    </location>
</feature>
<accession>C1AGE1</accession>
<gene>
    <name evidence="1" type="primary">mnmA</name>
    <name type="ordered locus">JTY_3042</name>
</gene>
<reference key="1">
    <citation type="journal article" date="2009" name="Vaccine">
        <title>Whole genome sequence analysis of Mycobacterium bovis bacillus Calmette-Guerin (BCG) Tokyo 172: a comparative study of BCG vaccine substrains.</title>
        <authorList>
            <person name="Seki M."/>
            <person name="Honda I."/>
            <person name="Fujita I."/>
            <person name="Yano I."/>
            <person name="Yamamoto S."/>
            <person name="Koyama A."/>
        </authorList>
    </citation>
    <scope>NUCLEOTIDE SEQUENCE [LARGE SCALE GENOMIC DNA]</scope>
    <source>
        <strain>BCG / Tokyo 172 / ATCC 35737 / TMC 1019</strain>
    </source>
</reference>
<protein>
    <recommendedName>
        <fullName evidence="1">tRNA-specific 2-thiouridylase MnmA</fullName>
        <ecNumber evidence="1">2.8.1.13</ecNumber>
    </recommendedName>
</protein>